<proteinExistence type="inferred from homology"/>
<organism>
    <name type="scientific">Thiobacillus denitrificans (strain ATCC 25259 / T1)</name>
    <dbReference type="NCBI Taxonomy" id="292415"/>
    <lineage>
        <taxon>Bacteria</taxon>
        <taxon>Pseudomonadati</taxon>
        <taxon>Pseudomonadota</taxon>
        <taxon>Betaproteobacteria</taxon>
        <taxon>Nitrosomonadales</taxon>
        <taxon>Thiobacillaceae</taxon>
        <taxon>Thiobacillus</taxon>
    </lineage>
</organism>
<sequence>MELNNIKPADGAKKDKRRVGRGIGSGLGKTAGRGHKGQKSRAGGFHKVGFEGGQMPMHRRLPKRGFVSLTKGDTARVRLSDLAGVGVAEIDLLVLKQAGVVSGAAKAAKVYLAGELGKAIKLSGVAVTKGARAAIEAAGGSVAE</sequence>
<evidence type="ECO:0000255" key="1">
    <source>
        <dbReference type="HAMAP-Rule" id="MF_01341"/>
    </source>
</evidence>
<evidence type="ECO:0000256" key="2">
    <source>
        <dbReference type="SAM" id="MobiDB-lite"/>
    </source>
</evidence>
<evidence type="ECO:0000305" key="3"/>
<accession>Q3SLN0</accession>
<feature type="chain" id="PRO_0000251578" description="Large ribosomal subunit protein uL15">
    <location>
        <begin position="1"/>
        <end position="144"/>
    </location>
</feature>
<feature type="region of interest" description="Disordered" evidence="2">
    <location>
        <begin position="1"/>
        <end position="57"/>
    </location>
</feature>
<feature type="compositionally biased region" description="Gly residues" evidence="2">
    <location>
        <begin position="21"/>
        <end position="31"/>
    </location>
</feature>
<gene>
    <name evidence="1" type="primary">rplO</name>
    <name type="ordered locus">Tbd_0424</name>
</gene>
<keyword id="KW-1185">Reference proteome</keyword>
<keyword id="KW-0687">Ribonucleoprotein</keyword>
<keyword id="KW-0689">Ribosomal protein</keyword>
<keyword id="KW-0694">RNA-binding</keyword>
<keyword id="KW-0699">rRNA-binding</keyword>
<comment type="function">
    <text evidence="1">Binds to the 23S rRNA.</text>
</comment>
<comment type="subunit">
    <text evidence="1">Part of the 50S ribosomal subunit.</text>
</comment>
<comment type="similarity">
    <text evidence="1">Belongs to the universal ribosomal protein uL15 family.</text>
</comment>
<dbReference type="EMBL" id="CP000116">
    <property type="protein sequence ID" value="AAZ96377.1"/>
    <property type="molecule type" value="Genomic_DNA"/>
</dbReference>
<dbReference type="RefSeq" id="WP_011310936.1">
    <property type="nucleotide sequence ID" value="NC_007404.1"/>
</dbReference>
<dbReference type="SMR" id="Q3SLN0"/>
<dbReference type="STRING" id="292415.Tbd_0424"/>
<dbReference type="KEGG" id="tbd:Tbd_0424"/>
<dbReference type="eggNOG" id="COG0200">
    <property type="taxonomic scope" value="Bacteria"/>
</dbReference>
<dbReference type="HOGENOM" id="CLU_055188_4_2_4"/>
<dbReference type="OrthoDB" id="9810293at2"/>
<dbReference type="Proteomes" id="UP000008291">
    <property type="component" value="Chromosome"/>
</dbReference>
<dbReference type="GO" id="GO:0022625">
    <property type="term" value="C:cytosolic large ribosomal subunit"/>
    <property type="evidence" value="ECO:0007669"/>
    <property type="project" value="TreeGrafter"/>
</dbReference>
<dbReference type="GO" id="GO:0019843">
    <property type="term" value="F:rRNA binding"/>
    <property type="evidence" value="ECO:0007669"/>
    <property type="project" value="UniProtKB-UniRule"/>
</dbReference>
<dbReference type="GO" id="GO:0003735">
    <property type="term" value="F:structural constituent of ribosome"/>
    <property type="evidence" value="ECO:0007669"/>
    <property type="project" value="InterPro"/>
</dbReference>
<dbReference type="GO" id="GO:0006412">
    <property type="term" value="P:translation"/>
    <property type="evidence" value="ECO:0007669"/>
    <property type="project" value="UniProtKB-UniRule"/>
</dbReference>
<dbReference type="Gene3D" id="3.100.10.10">
    <property type="match status" value="1"/>
</dbReference>
<dbReference type="HAMAP" id="MF_01341">
    <property type="entry name" value="Ribosomal_uL15"/>
    <property type="match status" value="1"/>
</dbReference>
<dbReference type="InterPro" id="IPR030878">
    <property type="entry name" value="Ribosomal_uL15"/>
</dbReference>
<dbReference type="InterPro" id="IPR021131">
    <property type="entry name" value="Ribosomal_uL15/eL18"/>
</dbReference>
<dbReference type="InterPro" id="IPR036227">
    <property type="entry name" value="Ribosomal_uL15/eL18_sf"/>
</dbReference>
<dbReference type="InterPro" id="IPR005749">
    <property type="entry name" value="Ribosomal_uL15_bac-type"/>
</dbReference>
<dbReference type="NCBIfam" id="TIGR01071">
    <property type="entry name" value="rplO_bact"/>
    <property type="match status" value="1"/>
</dbReference>
<dbReference type="PANTHER" id="PTHR12934">
    <property type="entry name" value="50S RIBOSOMAL PROTEIN L15"/>
    <property type="match status" value="1"/>
</dbReference>
<dbReference type="PANTHER" id="PTHR12934:SF11">
    <property type="entry name" value="LARGE RIBOSOMAL SUBUNIT PROTEIN UL15M"/>
    <property type="match status" value="1"/>
</dbReference>
<dbReference type="Pfam" id="PF00828">
    <property type="entry name" value="Ribosomal_L27A"/>
    <property type="match status" value="1"/>
</dbReference>
<dbReference type="SUPFAM" id="SSF52080">
    <property type="entry name" value="Ribosomal proteins L15p and L18e"/>
    <property type="match status" value="1"/>
</dbReference>
<name>RL15_THIDA</name>
<protein>
    <recommendedName>
        <fullName evidence="1">Large ribosomal subunit protein uL15</fullName>
    </recommendedName>
    <alternativeName>
        <fullName evidence="3">50S ribosomal protein L15</fullName>
    </alternativeName>
</protein>
<reference key="1">
    <citation type="journal article" date="2006" name="J. Bacteriol.">
        <title>The genome sequence of the obligately chemolithoautotrophic, facultatively anaerobic bacterium Thiobacillus denitrificans.</title>
        <authorList>
            <person name="Beller H.R."/>
            <person name="Chain P.S."/>
            <person name="Letain T.E."/>
            <person name="Chakicherla A."/>
            <person name="Larimer F.W."/>
            <person name="Richardson P.M."/>
            <person name="Coleman M.A."/>
            <person name="Wood A.P."/>
            <person name="Kelly D.P."/>
        </authorList>
    </citation>
    <scope>NUCLEOTIDE SEQUENCE [LARGE SCALE GENOMIC DNA]</scope>
    <source>
        <strain>ATCC 25259 / T1</strain>
    </source>
</reference>